<reference key="1">
    <citation type="journal article" date="1997" name="FEMS Microbiol. Lett.">
        <title>Molecular cloning and sequence analysis of the lysR gene from the extremely thermophilic eubacterium, Thermus thermophilus HB27.</title>
        <authorList>
            <person name="Kosuge T."/>
            <person name="Hoshino T."/>
        </authorList>
    </citation>
    <scope>NUCLEOTIDE SEQUENCE [GENOMIC DNA]</scope>
    <source>
        <strain>ATCC BAA-163 / DSM 7039 / HB27</strain>
    </source>
</reference>
<reference key="2">
    <citation type="journal article" date="2004" name="Nat. Biotechnol.">
        <title>The genome sequence of the extreme thermophile Thermus thermophilus.</title>
        <authorList>
            <person name="Henne A."/>
            <person name="Brueggemann H."/>
            <person name="Raasch C."/>
            <person name="Wiezer A."/>
            <person name="Hartsch T."/>
            <person name="Liesegang H."/>
            <person name="Johann A."/>
            <person name="Lienard T."/>
            <person name="Gohl O."/>
            <person name="Martinez-Arias R."/>
            <person name="Jacobi C."/>
            <person name="Starkuviene V."/>
            <person name="Schlenczeck S."/>
            <person name="Dencker S."/>
            <person name="Huber R."/>
            <person name="Klenk H.-P."/>
            <person name="Kramer W."/>
            <person name="Merkl R."/>
            <person name="Gottschalk G."/>
            <person name="Fritz H.-J."/>
        </authorList>
    </citation>
    <scope>NUCLEOTIDE SEQUENCE [LARGE SCALE GENOMIC DNA]</scope>
    <source>
        <strain>ATCC BAA-163 / DSM 7039 / HB27</strain>
    </source>
</reference>
<reference key="3">
    <citation type="journal article" date="1999" name="Genome Res.">
        <title>A prokaryotic gene cluster involved in synthesis of lysine through the amino adipate pathway: a key to the evolution of amino acid biosynthesis.</title>
        <authorList>
            <person name="Nishida H."/>
            <person name="Nishiyama M."/>
            <person name="Kobashi N."/>
            <person name="Kosuge T."/>
            <person name="Hoshino T."/>
            <person name="Yamane H."/>
        </authorList>
    </citation>
    <scope>ROLE IN LYSINE BIOSYNTHESIS</scope>
    <scope>PATHWAY</scope>
</reference>
<reference key="4">
    <citation type="journal article" date="2009" name="Nat. Chem. Biol.">
        <title>Discovery of proteinaceous N-modification in lysine biosynthesis of Thermus thermophilus.</title>
        <authorList>
            <person name="Horie A."/>
            <person name="Tomita T."/>
            <person name="Saiki A."/>
            <person name="Kono H."/>
            <person name="Taka H."/>
            <person name="Mineki R."/>
            <person name="Fujimura T."/>
            <person name="Nishiyama C."/>
            <person name="Kuzuyama T."/>
            <person name="Nishiyama M."/>
        </authorList>
    </citation>
    <scope>ROLE IN LYSINE BIOSYNTHESIS</scope>
    <scope>PATHWAY</scope>
    <source>
        <strain>ATCC BAA-163 / DSM 7039 / HB27</strain>
    </source>
</reference>
<reference key="5">
    <citation type="journal article" date="2015" name="J. Biol. Chem.">
        <title>Structural insight into amino group-carrier protein-mediated lysine biosynthesis: crystal structure of the LysZ.LysW complex from Thermus thermophilus.</title>
        <authorList>
            <person name="Yoshida A."/>
            <person name="Tomita T."/>
            <person name="Fujimura T."/>
            <person name="Nishiyama C."/>
            <person name="Kuzuyama T."/>
            <person name="Nishiyama M."/>
        </authorList>
    </citation>
    <scope>X-RAY CRYSTALLOGRAPHY (1.85 ANGSTROMS) IN COMPLEXES WITH ADP AND LYSW-GAMMA-ALPHA-AMINOADIPATE</scope>
    <scope>FUNCTION</scope>
    <scope>CATALYTIC ACTIVITY</scope>
    <scope>PATHWAY</scope>
    <scope>MUTAGENESIS OF HIS-57; ARG-111; ARG-112; LYS-113; LYS-117; LYS-123; LYS-125; ARG-128; ARG-227; ARG-230 AND LYS-231</scope>
</reference>
<gene>
    <name evidence="1 5 6" type="primary">lysZ</name>
    <name evidence="7" type="synonym">argB</name>
    <name type="ordered locus">TT_C1541</name>
</gene>
<protein>
    <recommendedName>
        <fullName evidence="1 8">[LysW]-aminoadipate kinase</fullName>
        <ecNumber evidence="1 4">2.7.2.17</ecNumber>
    </recommendedName>
</protein>
<comment type="function">
    <text evidence="4">Catalyzes the phosphorylation of LysW-gamma-alpha-aminoadipate. Does not phosphorylate N-acetyl-glutamate.</text>
</comment>
<comment type="catalytic activity">
    <reaction evidence="1 4">
        <text>[amino-group carrier protein]-C-terminal-N-(1,4-dicarboxybutan-1-yl)-L-glutamine + ATP = [amino-group carrier protein]-C-terminal-N-(1-carboxy-5-phosphooxy-5-oxopentan-1-yl)-L-glutamine + ADP</text>
        <dbReference type="Rhea" id="RHEA:41944"/>
        <dbReference type="Rhea" id="RHEA-COMP:9694"/>
        <dbReference type="Rhea" id="RHEA-COMP:9712"/>
        <dbReference type="ChEBI" id="CHEBI:30616"/>
        <dbReference type="ChEBI" id="CHEBI:78499"/>
        <dbReference type="ChEBI" id="CHEBI:78503"/>
        <dbReference type="ChEBI" id="CHEBI:456216"/>
        <dbReference type="EC" id="2.7.2.17"/>
    </reaction>
</comment>
<comment type="pathway">
    <text evidence="1 2 3 9">Amino-acid biosynthesis; L-lysine biosynthesis via AAA pathway; L-lysine from L-alpha-aminoadipate (Thermus route): step 2/5.</text>
</comment>
<comment type="subcellular location">
    <subcellularLocation>
        <location evidence="1">Cytoplasm</location>
    </subcellularLocation>
</comment>
<comment type="similarity">
    <text evidence="1 8">Belongs to the acetylglutamate kinase family. LysZ subfamily.</text>
</comment>
<proteinExistence type="evidence at protein level"/>
<organism>
    <name type="scientific">Thermus thermophilus (strain ATCC BAA-163 / DSM 7039 / HB27)</name>
    <dbReference type="NCBI Taxonomy" id="262724"/>
    <lineage>
        <taxon>Bacteria</taxon>
        <taxon>Thermotogati</taxon>
        <taxon>Deinococcota</taxon>
        <taxon>Deinococci</taxon>
        <taxon>Thermales</taxon>
        <taxon>Thermaceae</taxon>
        <taxon>Thermus</taxon>
    </lineage>
</organism>
<feature type="chain" id="PRO_0000112712" description="[LysW]-aminoadipate kinase">
    <location>
        <begin position="1"/>
        <end position="269"/>
    </location>
</feature>
<feature type="binding site" evidence="9 10">
    <location>
        <begin position="5"/>
        <end position="8"/>
    </location>
    <ligand>
        <name>ATP</name>
        <dbReference type="ChEBI" id="CHEBI:30616"/>
    </ligand>
</feature>
<feature type="binding site" evidence="1">
    <location>
        <position position="64"/>
    </location>
    <ligand>
        <name>substrate</name>
    </ligand>
</feature>
<feature type="binding site" evidence="9 10">
    <location>
        <position position="78"/>
    </location>
    <ligand>
        <name>ATP</name>
        <dbReference type="ChEBI" id="CHEBI:30616"/>
    </ligand>
</feature>
<feature type="binding site" evidence="1">
    <location>
        <position position="168"/>
    </location>
    <ligand>
        <name>substrate</name>
    </ligand>
</feature>
<feature type="site" description="Transition state stabilizer" evidence="1">
    <location>
        <position position="5"/>
    </location>
</feature>
<feature type="site" description="Transition state stabilizer" evidence="1">
    <location>
        <position position="231"/>
    </location>
</feature>
<feature type="mutagenesis site" description="Shows reduced activity." evidence="4">
    <original>H</original>
    <variation>A</variation>
    <location>
        <position position="57"/>
    </location>
</feature>
<feature type="mutagenesis site" description="Shows reduced activity." evidence="4">
    <original>R</original>
    <variation>E</variation>
    <location>
        <position position="111"/>
    </location>
</feature>
<feature type="mutagenesis site" description="Shows reduced activity." evidence="4">
    <original>R</original>
    <variation>E</variation>
    <location>
        <position position="112"/>
    </location>
</feature>
<feature type="mutagenesis site" description="Loss of activity." evidence="4">
    <original>K</original>
    <variation>E</variation>
    <location>
        <position position="113"/>
    </location>
</feature>
<feature type="mutagenesis site" description="Does not bind LysW." evidence="4">
    <original>K</original>
    <variation>E</variation>
    <location>
        <position position="117"/>
    </location>
</feature>
<feature type="mutagenesis site" description="Does not bind LysW." evidence="4">
    <original>K</original>
    <variation>E</variation>
    <location>
        <position position="123"/>
    </location>
</feature>
<feature type="mutagenesis site" description="Does not bind LysW." evidence="4">
    <original>K</original>
    <variation>E</variation>
    <location>
        <position position="125"/>
    </location>
</feature>
<feature type="mutagenesis site" description="Does not bind LysW." evidence="4">
    <original>R</original>
    <variation>E</variation>
    <location>
        <position position="128"/>
    </location>
</feature>
<feature type="mutagenesis site" description="Still binds LysW, but shows reduced activity." evidence="4">
    <original>R</original>
    <variation>E</variation>
    <location>
        <position position="227"/>
    </location>
</feature>
<feature type="mutagenesis site" description="Still binds LysW, but shows reduced activity." evidence="4">
    <original>R</original>
    <variation>E</variation>
    <location>
        <position position="230"/>
    </location>
</feature>
<feature type="mutagenesis site" description="Still binds LysW, but shows reduced activity." evidence="4">
    <original>K</original>
    <variation>E</variation>
    <location>
        <position position="231"/>
    </location>
</feature>
<feature type="strand" evidence="12">
    <location>
        <begin position="2"/>
        <end position="6"/>
    </location>
</feature>
<feature type="helix" evidence="12">
    <location>
        <begin position="14"/>
        <end position="26"/>
    </location>
</feature>
<feature type="strand" evidence="12">
    <location>
        <begin position="31"/>
        <end position="34"/>
    </location>
</feature>
<feature type="helix" evidence="12">
    <location>
        <begin position="38"/>
        <end position="47"/>
    </location>
</feature>
<feature type="strand" evidence="12">
    <location>
        <begin position="54"/>
        <end position="56"/>
    </location>
</feature>
<feature type="strand" evidence="12">
    <location>
        <begin position="62"/>
        <end position="64"/>
    </location>
</feature>
<feature type="helix" evidence="12">
    <location>
        <begin position="68"/>
        <end position="79"/>
    </location>
</feature>
<feature type="helix" evidence="12">
    <location>
        <begin position="81"/>
        <end position="92"/>
    </location>
</feature>
<feature type="strand" evidence="12">
    <location>
        <begin position="97"/>
        <end position="101"/>
    </location>
</feature>
<feature type="helix" evidence="12">
    <location>
        <begin position="104"/>
        <end position="106"/>
    </location>
</feature>
<feature type="strand" evidence="12">
    <location>
        <begin position="108"/>
        <end position="110"/>
    </location>
</feature>
<feature type="strand" evidence="12">
    <location>
        <begin position="114"/>
        <end position="120"/>
    </location>
</feature>
<feature type="strand" evidence="12">
    <location>
        <begin position="123"/>
        <end position="128"/>
    </location>
</feature>
<feature type="helix" evidence="12">
    <location>
        <begin position="140"/>
        <end position="148"/>
    </location>
</feature>
<feature type="strand" evidence="12">
    <location>
        <begin position="152"/>
        <end position="156"/>
    </location>
</feature>
<feature type="strand" evidence="12">
    <location>
        <begin position="159"/>
        <end position="161"/>
    </location>
</feature>
<feature type="strand" evidence="12">
    <location>
        <begin position="166"/>
        <end position="168"/>
    </location>
</feature>
<feature type="helix" evidence="12">
    <location>
        <begin position="171"/>
        <end position="182"/>
    </location>
</feature>
<feature type="strand" evidence="12">
    <location>
        <begin position="185"/>
        <end position="195"/>
    </location>
</feature>
<feature type="turn" evidence="12">
    <location>
        <begin position="198"/>
        <end position="201"/>
    </location>
</feature>
<feature type="helix" evidence="12">
    <location>
        <begin position="203"/>
        <end position="205"/>
    </location>
</feature>
<feature type="strand" evidence="12">
    <location>
        <begin position="214"/>
        <end position="216"/>
    </location>
</feature>
<feature type="helix" evidence="11">
    <location>
        <begin position="218"/>
        <end position="225"/>
    </location>
</feature>
<feature type="helix" evidence="12">
    <location>
        <begin position="227"/>
        <end position="240"/>
    </location>
</feature>
<feature type="strand" evidence="12">
    <location>
        <begin position="246"/>
        <end position="250"/>
    </location>
</feature>
<feature type="strand" evidence="12">
    <location>
        <begin position="253"/>
        <end position="255"/>
    </location>
</feature>
<feature type="helix" evidence="12">
    <location>
        <begin position="256"/>
        <end position="261"/>
    </location>
</feature>
<feature type="strand" evidence="12">
    <location>
        <begin position="265"/>
        <end position="268"/>
    </location>
</feature>
<accession>O50147</accession>
<dbReference type="EC" id="2.7.2.17" evidence="1 4"/>
<dbReference type="EMBL" id="AB006681">
    <property type="protein sequence ID" value="BAA23879.1"/>
    <property type="molecule type" value="Genomic_DNA"/>
</dbReference>
<dbReference type="EMBL" id="AE017221">
    <property type="protein sequence ID" value="AAS81883.1"/>
    <property type="molecule type" value="Genomic_DNA"/>
</dbReference>
<dbReference type="PIR" id="T43948">
    <property type="entry name" value="T43948"/>
</dbReference>
<dbReference type="RefSeq" id="WP_011173915.1">
    <property type="nucleotide sequence ID" value="NC_005835.1"/>
</dbReference>
<dbReference type="PDB" id="3WWM">
    <property type="method" value="X-ray"/>
    <property type="resolution" value="2.80 A"/>
    <property type="chains" value="A=1-269"/>
</dbReference>
<dbReference type="PDB" id="3WWN">
    <property type="method" value="X-ray"/>
    <property type="resolution" value="1.85 A"/>
    <property type="chains" value="A=1-269"/>
</dbReference>
<dbReference type="PDBsum" id="3WWM"/>
<dbReference type="PDBsum" id="3WWN"/>
<dbReference type="SMR" id="O50147"/>
<dbReference type="KEGG" id="tth:TT_C1541"/>
<dbReference type="eggNOG" id="COG0548">
    <property type="taxonomic scope" value="Bacteria"/>
</dbReference>
<dbReference type="HOGENOM" id="CLU_053680_2_1_0"/>
<dbReference type="OrthoDB" id="9803155at2"/>
<dbReference type="UniPathway" id="UPA00033">
    <property type="reaction ID" value="UER00036"/>
</dbReference>
<dbReference type="EvolutionaryTrace" id="O50147"/>
<dbReference type="Proteomes" id="UP000000592">
    <property type="component" value="Chromosome"/>
</dbReference>
<dbReference type="GO" id="GO:0005737">
    <property type="term" value="C:cytoplasm"/>
    <property type="evidence" value="ECO:0007669"/>
    <property type="project" value="UniProtKB-SubCell"/>
</dbReference>
<dbReference type="GO" id="GO:0003991">
    <property type="term" value="F:acetylglutamate kinase activity"/>
    <property type="evidence" value="ECO:0007669"/>
    <property type="project" value="TreeGrafter"/>
</dbReference>
<dbReference type="GO" id="GO:0005524">
    <property type="term" value="F:ATP binding"/>
    <property type="evidence" value="ECO:0007669"/>
    <property type="project" value="UniProtKB-KW"/>
</dbReference>
<dbReference type="GO" id="GO:0043744">
    <property type="term" value="F:N2-acetyl-L-aminoadipate kinase activity"/>
    <property type="evidence" value="ECO:0007669"/>
    <property type="project" value="RHEA"/>
</dbReference>
<dbReference type="GO" id="GO:0006526">
    <property type="term" value="P:L-arginine biosynthetic process"/>
    <property type="evidence" value="ECO:0007669"/>
    <property type="project" value="TreeGrafter"/>
</dbReference>
<dbReference type="GO" id="GO:0019878">
    <property type="term" value="P:lysine biosynthetic process via aminoadipic acid"/>
    <property type="evidence" value="ECO:0007669"/>
    <property type="project" value="UniProtKB-UniRule"/>
</dbReference>
<dbReference type="CDD" id="cd04251">
    <property type="entry name" value="AAK_NAGK-UC"/>
    <property type="match status" value="1"/>
</dbReference>
<dbReference type="Gene3D" id="3.40.1160.10">
    <property type="entry name" value="Acetylglutamate kinase-like"/>
    <property type="match status" value="1"/>
</dbReference>
<dbReference type="HAMAP" id="MF_02082">
    <property type="entry name" value="LysZ"/>
    <property type="match status" value="1"/>
</dbReference>
<dbReference type="InterPro" id="IPR036393">
    <property type="entry name" value="AceGlu_kinase-like_sf"/>
</dbReference>
<dbReference type="InterPro" id="IPR004662">
    <property type="entry name" value="AcgluKinase_fam"/>
</dbReference>
<dbReference type="InterPro" id="IPR001048">
    <property type="entry name" value="Asp/Glu/Uridylate_kinase"/>
</dbReference>
<dbReference type="InterPro" id="IPR001057">
    <property type="entry name" value="Glu/AcGlu_kinase"/>
</dbReference>
<dbReference type="InterPro" id="IPR037529">
    <property type="entry name" value="LysZ"/>
</dbReference>
<dbReference type="NCBIfam" id="TIGR00761">
    <property type="entry name" value="argB"/>
    <property type="match status" value="1"/>
</dbReference>
<dbReference type="NCBIfam" id="NF010659">
    <property type="entry name" value="PRK14058.1-1"/>
    <property type="match status" value="1"/>
</dbReference>
<dbReference type="PANTHER" id="PTHR23342:SF20">
    <property type="entry name" value="[LYSW]-AMINOADIPATE KINASE"/>
    <property type="match status" value="1"/>
</dbReference>
<dbReference type="PANTHER" id="PTHR23342">
    <property type="entry name" value="N-ACETYLGLUTAMATE SYNTHASE"/>
    <property type="match status" value="1"/>
</dbReference>
<dbReference type="Pfam" id="PF00696">
    <property type="entry name" value="AA_kinase"/>
    <property type="match status" value="1"/>
</dbReference>
<dbReference type="PIRSF" id="PIRSF000728">
    <property type="entry name" value="NAGK"/>
    <property type="match status" value="1"/>
</dbReference>
<dbReference type="PRINTS" id="PR00474">
    <property type="entry name" value="GLU5KINASE"/>
</dbReference>
<dbReference type="SUPFAM" id="SSF53633">
    <property type="entry name" value="Carbamate kinase-like"/>
    <property type="match status" value="1"/>
</dbReference>
<name>LYSZ_THET2</name>
<sequence length="269" mass="29096">MIVVKVGGAEGINYEAVAKDAASLWKEGVKLLLVHGGSAETNKVAEALGHPPRFLTHPGGQVSRLTDRKTLEIFEMVYCGLVNKRLVELLQKEGANAIGLSGLDGRLFVGRRKTAVKYVENGKVKVHRGDYTGTVEEVNKALLDLLLQAGYLPVLTPPALSYENEAINTDGDQIAALLATLYGAEALVYLSNVPGLLARYPDEASLVREIPVERIEDPEYLALAQGRMKRKVMGAVEAVRGGVKRVVFADARVENPIRRALSGEGTVVR</sequence>
<keyword id="KW-0002">3D-structure</keyword>
<keyword id="KW-0028">Amino-acid biosynthesis</keyword>
<keyword id="KW-0067">ATP-binding</keyword>
<keyword id="KW-0963">Cytoplasm</keyword>
<keyword id="KW-0418">Kinase</keyword>
<keyword id="KW-0457">Lysine biosynthesis</keyword>
<keyword id="KW-0547">Nucleotide-binding</keyword>
<keyword id="KW-0808">Transferase</keyword>
<evidence type="ECO:0000255" key="1">
    <source>
        <dbReference type="HAMAP-Rule" id="MF_02082"/>
    </source>
</evidence>
<evidence type="ECO:0000269" key="2">
    <source>
    </source>
</evidence>
<evidence type="ECO:0000269" key="3">
    <source>
    </source>
</evidence>
<evidence type="ECO:0000269" key="4">
    <source>
    </source>
</evidence>
<evidence type="ECO:0000303" key="5">
    <source>
    </source>
</evidence>
<evidence type="ECO:0000303" key="6">
    <source>
    </source>
</evidence>
<evidence type="ECO:0000303" key="7">
    <source>
    </source>
</evidence>
<evidence type="ECO:0000305" key="8"/>
<evidence type="ECO:0000305" key="9">
    <source>
    </source>
</evidence>
<evidence type="ECO:0007744" key="10">
    <source>
        <dbReference type="PDB" id="3WWM"/>
    </source>
</evidence>
<evidence type="ECO:0007829" key="11">
    <source>
        <dbReference type="PDB" id="3WWM"/>
    </source>
</evidence>
<evidence type="ECO:0007829" key="12">
    <source>
        <dbReference type="PDB" id="3WWN"/>
    </source>
</evidence>